<dbReference type="EMBL" id="DAAA02049501">
    <property type="status" value="NOT_ANNOTATED_CDS"/>
    <property type="molecule type" value="Genomic_DNA"/>
</dbReference>
<dbReference type="RefSeq" id="XP_005195905.1">
    <property type="nucleotide sequence ID" value="XM_005195848.3"/>
</dbReference>
<dbReference type="RefSeq" id="XP_005195906.1">
    <property type="nucleotide sequence ID" value="XM_005195849.3"/>
</dbReference>
<dbReference type="RefSeq" id="XP_005221358.1">
    <property type="nucleotide sequence ID" value="XM_005221301.3"/>
</dbReference>
<dbReference type="RefSeq" id="XP_005221359.1">
    <property type="nucleotide sequence ID" value="XM_005221302.3"/>
</dbReference>
<dbReference type="RefSeq" id="XP_010814917.1">
    <property type="nucleotide sequence ID" value="XM_010816615.2"/>
</dbReference>
<dbReference type="RefSeq" id="XP_010822626.1">
    <property type="nucleotide sequence ID" value="XM_010824324.2"/>
</dbReference>
<dbReference type="CORUM" id="E1B7R9"/>
<dbReference type="FunCoup" id="E1B7R9">
    <property type="interactions" value="33"/>
</dbReference>
<dbReference type="PaxDb" id="9913-ENSBTAP00000053128"/>
<dbReference type="Ensembl" id="ENSBTAT00000111170.1">
    <property type="protein sequence ID" value="ENSBTAP00000079016.1"/>
    <property type="gene ID" value="ENSBTAG00000058601.1"/>
</dbReference>
<dbReference type="eggNOG" id="ENOG502TE0N">
    <property type="taxonomic scope" value="Eukaryota"/>
</dbReference>
<dbReference type="GeneTree" id="ENSGT00520000058096"/>
<dbReference type="HOGENOM" id="CLU_3175255_0_0_1"/>
<dbReference type="InParanoid" id="E1B7R9"/>
<dbReference type="Proteomes" id="UP000009136">
    <property type="component" value="Chromosome 19"/>
</dbReference>
<dbReference type="GO" id="GO:0005783">
    <property type="term" value="C:endoplasmic reticulum"/>
    <property type="evidence" value="ECO:0007669"/>
    <property type="project" value="UniProtKB-SubCell"/>
</dbReference>
<dbReference type="GO" id="GO:0005576">
    <property type="term" value="C:extracellular region"/>
    <property type="evidence" value="ECO:0007669"/>
    <property type="project" value="Ensembl"/>
</dbReference>
<dbReference type="GO" id="GO:0005794">
    <property type="term" value="C:Golgi apparatus"/>
    <property type="evidence" value="ECO:0007669"/>
    <property type="project" value="UniProtKB-SubCell"/>
</dbReference>
<dbReference type="GO" id="GO:0042622">
    <property type="term" value="C:photoreceptor outer segment membrane"/>
    <property type="evidence" value="ECO:0000314"/>
    <property type="project" value="UniProtKB"/>
</dbReference>
<dbReference type="GO" id="GO:0002046">
    <property type="term" value="F:opsin binding"/>
    <property type="evidence" value="ECO:0000353"/>
    <property type="project" value="UniProtKB"/>
</dbReference>
<dbReference type="GO" id="GO:0007601">
    <property type="term" value="P:visual perception"/>
    <property type="evidence" value="ECO:0007669"/>
    <property type="project" value="UniProtKB-KW"/>
</dbReference>
<dbReference type="InterPro" id="IPR027937">
    <property type="entry name" value="PRCD"/>
</dbReference>
<dbReference type="PANTHER" id="PTHR38501">
    <property type="entry name" value="PHOTORECEPTOR DISK COMPONENT PRCD"/>
    <property type="match status" value="1"/>
</dbReference>
<dbReference type="PANTHER" id="PTHR38501:SF1">
    <property type="entry name" value="PHOTORECEPTOR DISK COMPONENT PRCD"/>
    <property type="match status" value="1"/>
</dbReference>
<dbReference type="Pfam" id="PF15201">
    <property type="entry name" value="Rod_cone_degen"/>
    <property type="match status" value="1"/>
</dbReference>
<comment type="function">
    <text evidence="1">Involved in vision.</text>
</comment>
<comment type="subunit">
    <text evidence="5">Interacts with RHO/rhodopsin; the interaction promotes PRCD stability.</text>
</comment>
<comment type="subcellular location">
    <subcellularLocation>
        <location evidence="4 5">Cell projection</location>
        <location evidence="4 5">Cilium</location>
        <location evidence="4 5">Photoreceptor outer segment</location>
    </subcellularLocation>
    <subcellularLocation>
        <location evidence="5">Membrane</location>
        <topology evidence="5">Lipid-anchor</topology>
        <orientation evidence="5">Cytoplasmic side</orientation>
    </subcellularLocation>
    <subcellularLocation>
        <location evidence="1">Endoplasmic reticulum</location>
    </subcellularLocation>
    <subcellularLocation>
        <location evidence="1">Golgi apparatus</location>
    </subcellularLocation>
    <text evidence="5">Localizes to photoreceptor disk membranes in the photoreceptor outer segment.</text>
</comment>
<comment type="tissue specificity">
    <text evidence="4 5">Expressed in retina (at protein level).</text>
</comment>
<comment type="PTM">
    <text evidence="2 5">Palmitoylated at Cys-2 (PubMed:27509380). Palmitoylation is essential for protein stability and trafficking to the photoreceptor outer segment, but does not appear to be essential for membrane localization (PubMed:27509380). Probably palmitoylated by ZDHHC3 (By similarity).</text>
</comment>
<comment type="PTM">
    <text evidence="5">Phosphorylated.</text>
</comment>
<comment type="similarity">
    <text evidence="7">Belongs to the PRCD family.</text>
</comment>
<name>PRCD_BOVIN</name>
<protein>
    <recommendedName>
        <fullName evidence="6">Photoreceptor disk component PRCD</fullName>
    </recommendedName>
    <alternativeName>
        <fullName evidence="6">Progressive rod-cone degeneration protein</fullName>
    </alternativeName>
</protein>
<feature type="chain" id="PRO_5003143736" description="Photoreceptor disk component PRCD">
    <location>
        <begin position="1"/>
        <end position="54"/>
    </location>
</feature>
<feature type="region of interest" description="Disordered" evidence="3">
    <location>
        <begin position="24"/>
        <end position="54"/>
    </location>
</feature>
<feature type="compositionally biased region" description="Polar residues" evidence="3">
    <location>
        <begin position="35"/>
        <end position="46"/>
    </location>
</feature>
<feature type="lipid moiety-binding region" description="S-palmitoyl cysteine" evidence="5">
    <location>
        <position position="2"/>
    </location>
</feature>
<organism evidence="8">
    <name type="scientific">Bos taurus</name>
    <name type="common">Bovine</name>
    <dbReference type="NCBI Taxonomy" id="9913"/>
    <lineage>
        <taxon>Eukaryota</taxon>
        <taxon>Metazoa</taxon>
        <taxon>Chordata</taxon>
        <taxon>Craniata</taxon>
        <taxon>Vertebrata</taxon>
        <taxon>Euteleostomi</taxon>
        <taxon>Mammalia</taxon>
        <taxon>Eutheria</taxon>
        <taxon>Laurasiatheria</taxon>
        <taxon>Artiodactyla</taxon>
        <taxon>Ruminantia</taxon>
        <taxon>Pecora</taxon>
        <taxon>Bovidae</taxon>
        <taxon>Bovinae</taxon>
        <taxon>Bos</taxon>
    </lineage>
</organism>
<reference evidence="8" key="1">
    <citation type="journal article" date="2009" name="Genome Biol.">
        <title>A whole-genome assembly of the domestic cow, Bos taurus.</title>
        <authorList>
            <person name="Zimin A.V."/>
            <person name="Delcher A.L."/>
            <person name="Florea L."/>
            <person name="Kelley D.R."/>
            <person name="Schatz M.C."/>
            <person name="Puiu D."/>
            <person name="Hanrahan F."/>
            <person name="Pertea G."/>
            <person name="Van Tassell C.P."/>
            <person name="Sonstegard T.S."/>
            <person name="Marcais G."/>
            <person name="Roberts M."/>
            <person name="Subramanian P."/>
            <person name="Yorke J.A."/>
            <person name="Salzberg S.L."/>
        </authorList>
    </citation>
    <scope>NUCLEOTIDE SEQUENCE [LARGE SCALE GENOMIC DNA]</scope>
    <source>
        <strain>Hereford</strain>
    </source>
</reference>
<reference evidence="7" key="2">
    <citation type="journal article" date="2013" name="J. Proteome Res.">
        <title>Proteomic identification of unique photoreceptor disc components reveals the presence of PRCD, a protein linked to retinal degeneration.</title>
        <authorList>
            <person name="Skiba N.P."/>
            <person name="Spencer W.J."/>
            <person name="Salinas R.Y."/>
            <person name="Lieu E.C."/>
            <person name="Thompson J.W."/>
            <person name="Arshavsky V.Y."/>
        </authorList>
    </citation>
    <scope>SUBCELLULAR LOCATION</scope>
    <scope>TISSUE SPECIFICITY</scope>
    <scope>IDENTIFICATION BY MASS SPECTROMETRY</scope>
</reference>
<reference evidence="7" key="3">
    <citation type="journal article" date="2016" name="Biochemistry">
        <title>Progressive Rod-Cone Degeneration (PRCD) Protein Requires N-Terminal S-Acylation and Rhodopsin Binding for Photoreceptor Outer Segment Localization and Maintaining Intracellular Stability.</title>
        <authorList>
            <person name="Spencer W.J."/>
            <person name="Pearring J.N."/>
            <person name="Salinas R.Y."/>
            <person name="Loiselle D.R."/>
            <person name="Skiba N.P."/>
            <person name="Arshavsky V.Y."/>
        </authorList>
    </citation>
    <scope>INTERACTION WITH RHO</scope>
    <scope>SUBCELLULAR LOCATION</scope>
    <scope>TISSUE SPECIFICITY</scope>
    <scope>PALMITOYLATION AT CYS-2</scope>
    <scope>PHOSPHORYLATION</scope>
</reference>
<keyword id="KW-0966">Cell projection</keyword>
<keyword id="KW-0256">Endoplasmic reticulum</keyword>
<keyword id="KW-0333">Golgi apparatus</keyword>
<keyword id="KW-0449">Lipoprotein</keyword>
<keyword id="KW-0472">Membrane</keyword>
<keyword id="KW-0564">Palmitate</keyword>
<keyword id="KW-0597">Phosphoprotein</keyword>
<keyword id="KW-1185">Reference proteome</keyword>
<keyword id="KW-0716">Sensory transduction</keyword>
<keyword id="KW-0844">Vision</keyword>
<evidence type="ECO:0000250" key="1">
    <source>
        <dbReference type="UniProtKB" id="Q00LT1"/>
    </source>
</evidence>
<evidence type="ECO:0000250" key="2">
    <source>
        <dbReference type="UniProtKB" id="Q00LT2"/>
    </source>
</evidence>
<evidence type="ECO:0000256" key="3">
    <source>
        <dbReference type="SAM" id="MobiDB-lite"/>
    </source>
</evidence>
<evidence type="ECO:0000269" key="4">
    <source>
    </source>
</evidence>
<evidence type="ECO:0000269" key="5">
    <source>
    </source>
</evidence>
<evidence type="ECO:0000303" key="6">
    <source>
    </source>
</evidence>
<evidence type="ECO:0000305" key="7"/>
<evidence type="ECO:0000312" key="8">
    <source>
        <dbReference type="Proteomes" id="UP000009136"/>
    </source>
</evidence>
<accession>E1B7R9</accession>
<proteinExistence type="evidence at protein level"/>
<gene>
    <name evidence="6" type="primary">PRCD</name>
</gene>
<sequence>MCTTLFLLSTLAMLWRRRFANRVQPEPNGVDGAVSGSSLETDLQSSGREKEPLK</sequence>